<feature type="chain" id="PRO_0000247183" description="Proteasome maturation protein">
    <location>
        <begin position="1"/>
        <end position="141"/>
    </location>
</feature>
<feature type="cross-link" description="Glycyl lysine isopeptide (Lys-Gly) (interchain with G-Cter in SUMO2)" evidence="2">
    <location>
        <position position="39"/>
    </location>
</feature>
<keyword id="KW-0143">Chaperone</keyword>
<keyword id="KW-0963">Cytoplasm</keyword>
<keyword id="KW-0256">Endoplasmic reticulum</keyword>
<keyword id="KW-1017">Isopeptide bond</keyword>
<keyword id="KW-0472">Membrane</keyword>
<keyword id="KW-0492">Microsome</keyword>
<keyword id="KW-0539">Nucleus</keyword>
<keyword id="KW-1185">Reference proteome</keyword>
<keyword id="KW-0832">Ubl conjugation</keyword>
<evidence type="ECO:0000250" key="1"/>
<evidence type="ECO:0000250" key="2">
    <source>
        <dbReference type="UniProtKB" id="Q9Y244"/>
    </source>
</evidence>
<evidence type="ECO:0000305" key="3"/>
<dbReference type="EMBL" id="BC102689">
    <property type="protein sequence ID" value="AAI02690.1"/>
    <property type="molecule type" value="mRNA"/>
</dbReference>
<dbReference type="RefSeq" id="NP_001029548.1">
    <property type="nucleotide sequence ID" value="NM_001034376.2"/>
</dbReference>
<dbReference type="SMR" id="Q3SZV5"/>
<dbReference type="FunCoup" id="Q3SZV5">
    <property type="interactions" value="2265"/>
</dbReference>
<dbReference type="STRING" id="9913.ENSBTAP00000069772"/>
<dbReference type="PaxDb" id="9913-ENSBTAP00000018626"/>
<dbReference type="Ensembl" id="ENSBTAT00000018626.4">
    <property type="protein sequence ID" value="ENSBTAP00000018626.3"/>
    <property type="gene ID" value="ENSBTAG00000014024.5"/>
</dbReference>
<dbReference type="GeneID" id="510314"/>
<dbReference type="KEGG" id="bta:510314"/>
<dbReference type="CTD" id="51371"/>
<dbReference type="VEuPathDB" id="HostDB:ENSBTAG00000014024"/>
<dbReference type="VGNC" id="VGNC:33157">
    <property type="gene designation" value="POMP"/>
</dbReference>
<dbReference type="eggNOG" id="KOG3061">
    <property type="taxonomic scope" value="Eukaryota"/>
</dbReference>
<dbReference type="GeneTree" id="ENSGT00390000010734"/>
<dbReference type="HOGENOM" id="CLU_100687_3_0_1"/>
<dbReference type="InParanoid" id="Q3SZV5"/>
<dbReference type="OMA" id="HADMEKK"/>
<dbReference type="OrthoDB" id="15001at2759"/>
<dbReference type="TreeFam" id="TF323548"/>
<dbReference type="Reactome" id="R-BTA-9907900">
    <property type="pathway name" value="Proteasome assembly"/>
</dbReference>
<dbReference type="Proteomes" id="UP000009136">
    <property type="component" value="Chromosome 12"/>
</dbReference>
<dbReference type="Bgee" id="ENSBTAG00000014024">
    <property type="expression patterns" value="Expressed in oocyte and 104 other cell types or tissues"/>
</dbReference>
<dbReference type="GO" id="GO:0005737">
    <property type="term" value="C:cytoplasm"/>
    <property type="evidence" value="ECO:0000318"/>
    <property type="project" value="GO_Central"/>
</dbReference>
<dbReference type="GO" id="GO:0005829">
    <property type="term" value="C:cytosol"/>
    <property type="evidence" value="ECO:0007669"/>
    <property type="project" value="UniProtKB-SubCell"/>
</dbReference>
<dbReference type="GO" id="GO:0005783">
    <property type="term" value="C:endoplasmic reticulum"/>
    <property type="evidence" value="ECO:0007669"/>
    <property type="project" value="UniProtKB-KW"/>
</dbReference>
<dbReference type="GO" id="GO:0016020">
    <property type="term" value="C:membrane"/>
    <property type="evidence" value="ECO:0007669"/>
    <property type="project" value="UniProtKB-KW"/>
</dbReference>
<dbReference type="GO" id="GO:0016607">
    <property type="term" value="C:nuclear speck"/>
    <property type="evidence" value="ECO:0007669"/>
    <property type="project" value="Ensembl"/>
</dbReference>
<dbReference type="GO" id="GO:0005634">
    <property type="term" value="C:nucleus"/>
    <property type="evidence" value="ECO:0000318"/>
    <property type="project" value="GO_Central"/>
</dbReference>
<dbReference type="GO" id="GO:0043248">
    <property type="term" value="P:proteasome assembly"/>
    <property type="evidence" value="ECO:0000318"/>
    <property type="project" value="GO_Central"/>
</dbReference>
<dbReference type="InterPro" id="IPR008012">
    <property type="entry name" value="Ump1"/>
</dbReference>
<dbReference type="PANTHER" id="PTHR12828:SF3">
    <property type="entry name" value="PROTEASOME MATURATION PROTEIN"/>
    <property type="match status" value="1"/>
</dbReference>
<dbReference type="PANTHER" id="PTHR12828">
    <property type="entry name" value="PROTEASOME MATURATION PROTEIN UMP1"/>
    <property type="match status" value="1"/>
</dbReference>
<dbReference type="Pfam" id="PF05348">
    <property type="entry name" value="UMP1"/>
    <property type="match status" value="1"/>
</dbReference>
<accession>Q3SZV5</accession>
<proteinExistence type="evidence at transcript level"/>
<protein>
    <recommendedName>
        <fullName>Proteasome maturation protein</fullName>
    </recommendedName>
    <alternativeName>
        <fullName>Proteassemblin</fullName>
    </alternativeName>
</protein>
<reference key="1">
    <citation type="submission" date="2005-08" db="EMBL/GenBank/DDBJ databases">
        <authorList>
            <consortium name="NIH - Mammalian Gene Collection (MGC) project"/>
        </authorList>
    </citation>
    <scope>NUCLEOTIDE SEQUENCE [LARGE SCALE MRNA]</scope>
    <source>
        <strain>Hereford</strain>
        <tissue>Testis</tissue>
    </source>
</reference>
<name>POMP_BOVIN</name>
<comment type="function">
    <text evidence="1">Molecular chaperone essential for the assembly of standard proteasomes and immunoproteasomes. Degraded after completion of proteasome maturation (By similarity). Mediates the association of 20S preproteasome with the endoplasmic reticulum (By similarity).</text>
</comment>
<comment type="subunit">
    <text evidence="1">Constituent of preproteasomes, but not of mature 20S proteasomes. Within the preproteasome, may directly interact with PSMB1/beta6, PSMB4/beta7, PSMB5/beta5, PSMB6/beta1 and PSMB9/beta1i. Interaction with PSMB8/beta5i is controversial. Forms tetramers (By similarity).</text>
</comment>
<comment type="subcellular location">
    <subcellularLocation>
        <location evidence="1">Cytoplasm</location>
        <location evidence="1">Cytosol</location>
    </subcellularLocation>
    <subcellularLocation>
        <location evidence="1">Nucleus</location>
    </subcellularLocation>
    <subcellularLocation>
        <location evidence="1">Microsome membrane</location>
    </subcellularLocation>
</comment>
<comment type="similarity">
    <text evidence="3">Belongs to the POMP/UMP1 family.</text>
</comment>
<sequence length="141" mass="15826">MNARGLGSQLKDSIPVTELSASGPFESHDLLRKGFSCVKNELLPSHPLELSEKNFQLNQDKMNFSTLRNIQGLFAPLKLQMEFKAVQQVQRLPFLPSSNLSLDILRGNDETIGFEDILNDPSQSELMGEPHLMVEYKLGLL</sequence>
<gene>
    <name type="primary">POMP</name>
</gene>
<organism>
    <name type="scientific">Bos taurus</name>
    <name type="common">Bovine</name>
    <dbReference type="NCBI Taxonomy" id="9913"/>
    <lineage>
        <taxon>Eukaryota</taxon>
        <taxon>Metazoa</taxon>
        <taxon>Chordata</taxon>
        <taxon>Craniata</taxon>
        <taxon>Vertebrata</taxon>
        <taxon>Euteleostomi</taxon>
        <taxon>Mammalia</taxon>
        <taxon>Eutheria</taxon>
        <taxon>Laurasiatheria</taxon>
        <taxon>Artiodactyla</taxon>
        <taxon>Ruminantia</taxon>
        <taxon>Pecora</taxon>
        <taxon>Bovidae</taxon>
        <taxon>Bovinae</taxon>
        <taxon>Bos</taxon>
    </lineage>
</organism>